<accession>Q747Q3</accession>
<comment type="function">
    <text evidence="1">Catalyzes the transfer of a phosphate group to glutamate to form L-glutamate 5-phosphate.</text>
</comment>
<comment type="catalytic activity">
    <reaction evidence="1">
        <text>L-glutamate + ATP = L-glutamyl 5-phosphate + ADP</text>
        <dbReference type="Rhea" id="RHEA:14877"/>
        <dbReference type="ChEBI" id="CHEBI:29985"/>
        <dbReference type="ChEBI" id="CHEBI:30616"/>
        <dbReference type="ChEBI" id="CHEBI:58274"/>
        <dbReference type="ChEBI" id="CHEBI:456216"/>
        <dbReference type="EC" id="2.7.2.11"/>
    </reaction>
</comment>
<comment type="pathway">
    <text evidence="1">Amino-acid biosynthesis; L-proline biosynthesis; L-glutamate 5-semialdehyde from L-glutamate: step 1/2.</text>
</comment>
<comment type="subcellular location">
    <subcellularLocation>
        <location evidence="1">Cytoplasm</location>
    </subcellularLocation>
</comment>
<comment type="similarity">
    <text evidence="1">Belongs to the glutamate 5-kinase family.</text>
</comment>
<name>PROB_GEOSL</name>
<dbReference type="EC" id="2.7.2.11" evidence="1"/>
<dbReference type="EMBL" id="AE017180">
    <property type="protein sequence ID" value="AAR36603.1"/>
    <property type="molecule type" value="Genomic_DNA"/>
</dbReference>
<dbReference type="RefSeq" id="NP_954253.1">
    <property type="nucleotide sequence ID" value="NC_002939.5"/>
</dbReference>
<dbReference type="RefSeq" id="WP_010943830.1">
    <property type="nucleotide sequence ID" value="NC_002939.5"/>
</dbReference>
<dbReference type="SMR" id="Q747Q3"/>
<dbReference type="FunCoup" id="Q747Q3">
    <property type="interactions" value="401"/>
</dbReference>
<dbReference type="STRING" id="243231.GSU3212"/>
<dbReference type="EnsemblBacteria" id="AAR36603">
    <property type="protein sequence ID" value="AAR36603"/>
    <property type="gene ID" value="GSU3212"/>
</dbReference>
<dbReference type="KEGG" id="gsu:GSU3212"/>
<dbReference type="PATRIC" id="fig|243231.5.peg.3236"/>
<dbReference type="eggNOG" id="COG0263">
    <property type="taxonomic scope" value="Bacteria"/>
</dbReference>
<dbReference type="HOGENOM" id="CLU_025400_2_0_7"/>
<dbReference type="InParanoid" id="Q747Q3"/>
<dbReference type="OrthoDB" id="9804434at2"/>
<dbReference type="UniPathway" id="UPA00098">
    <property type="reaction ID" value="UER00359"/>
</dbReference>
<dbReference type="Proteomes" id="UP000000577">
    <property type="component" value="Chromosome"/>
</dbReference>
<dbReference type="GO" id="GO:0005829">
    <property type="term" value="C:cytosol"/>
    <property type="evidence" value="ECO:0000318"/>
    <property type="project" value="GO_Central"/>
</dbReference>
<dbReference type="GO" id="GO:0005524">
    <property type="term" value="F:ATP binding"/>
    <property type="evidence" value="ECO:0007669"/>
    <property type="project" value="UniProtKB-KW"/>
</dbReference>
<dbReference type="GO" id="GO:0004349">
    <property type="term" value="F:glutamate 5-kinase activity"/>
    <property type="evidence" value="ECO:0000318"/>
    <property type="project" value="GO_Central"/>
</dbReference>
<dbReference type="GO" id="GO:0003723">
    <property type="term" value="F:RNA binding"/>
    <property type="evidence" value="ECO:0007669"/>
    <property type="project" value="InterPro"/>
</dbReference>
<dbReference type="GO" id="GO:0055129">
    <property type="term" value="P:L-proline biosynthetic process"/>
    <property type="evidence" value="ECO:0007669"/>
    <property type="project" value="UniProtKB-UniRule"/>
</dbReference>
<dbReference type="GO" id="GO:0006561">
    <property type="term" value="P:proline biosynthetic process"/>
    <property type="evidence" value="ECO:0000318"/>
    <property type="project" value="GO_Central"/>
</dbReference>
<dbReference type="CDD" id="cd04242">
    <property type="entry name" value="AAK_G5K_ProB"/>
    <property type="match status" value="1"/>
</dbReference>
<dbReference type="CDD" id="cd21157">
    <property type="entry name" value="PUA_G5K"/>
    <property type="match status" value="1"/>
</dbReference>
<dbReference type="FunFam" id="2.30.130.10:FF:000007">
    <property type="entry name" value="Glutamate 5-kinase"/>
    <property type="match status" value="1"/>
</dbReference>
<dbReference type="FunFam" id="3.40.1160.10:FF:000018">
    <property type="entry name" value="Glutamate 5-kinase"/>
    <property type="match status" value="1"/>
</dbReference>
<dbReference type="Gene3D" id="3.40.1160.10">
    <property type="entry name" value="Acetylglutamate kinase-like"/>
    <property type="match status" value="1"/>
</dbReference>
<dbReference type="Gene3D" id="2.30.130.10">
    <property type="entry name" value="PUA domain"/>
    <property type="match status" value="1"/>
</dbReference>
<dbReference type="HAMAP" id="MF_00456">
    <property type="entry name" value="ProB"/>
    <property type="match status" value="1"/>
</dbReference>
<dbReference type="InterPro" id="IPR036393">
    <property type="entry name" value="AceGlu_kinase-like_sf"/>
</dbReference>
<dbReference type="InterPro" id="IPR001048">
    <property type="entry name" value="Asp/Glu/Uridylate_kinase"/>
</dbReference>
<dbReference type="InterPro" id="IPR041739">
    <property type="entry name" value="G5K_ProB"/>
</dbReference>
<dbReference type="InterPro" id="IPR001057">
    <property type="entry name" value="Glu/AcGlu_kinase"/>
</dbReference>
<dbReference type="InterPro" id="IPR011529">
    <property type="entry name" value="Glu_5kinase"/>
</dbReference>
<dbReference type="InterPro" id="IPR005715">
    <property type="entry name" value="Glu_5kinase/COase_Synthase"/>
</dbReference>
<dbReference type="InterPro" id="IPR019797">
    <property type="entry name" value="Glutamate_5-kinase_CS"/>
</dbReference>
<dbReference type="InterPro" id="IPR002478">
    <property type="entry name" value="PUA"/>
</dbReference>
<dbReference type="InterPro" id="IPR015947">
    <property type="entry name" value="PUA-like_sf"/>
</dbReference>
<dbReference type="InterPro" id="IPR036974">
    <property type="entry name" value="PUA_sf"/>
</dbReference>
<dbReference type="NCBIfam" id="TIGR01027">
    <property type="entry name" value="proB"/>
    <property type="match status" value="1"/>
</dbReference>
<dbReference type="PANTHER" id="PTHR43654">
    <property type="entry name" value="GLUTAMATE 5-KINASE"/>
    <property type="match status" value="1"/>
</dbReference>
<dbReference type="PANTHER" id="PTHR43654:SF1">
    <property type="entry name" value="ISOPENTENYL PHOSPHATE KINASE"/>
    <property type="match status" value="1"/>
</dbReference>
<dbReference type="Pfam" id="PF00696">
    <property type="entry name" value="AA_kinase"/>
    <property type="match status" value="1"/>
</dbReference>
<dbReference type="Pfam" id="PF01472">
    <property type="entry name" value="PUA"/>
    <property type="match status" value="1"/>
</dbReference>
<dbReference type="PIRSF" id="PIRSF000729">
    <property type="entry name" value="GK"/>
    <property type="match status" value="1"/>
</dbReference>
<dbReference type="PRINTS" id="PR00474">
    <property type="entry name" value="GLU5KINASE"/>
</dbReference>
<dbReference type="SMART" id="SM00359">
    <property type="entry name" value="PUA"/>
    <property type="match status" value="1"/>
</dbReference>
<dbReference type="SUPFAM" id="SSF53633">
    <property type="entry name" value="Carbamate kinase-like"/>
    <property type="match status" value="1"/>
</dbReference>
<dbReference type="SUPFAM" id="SSF88697">
    <property type="entry name" value="PUA domain-like"/>
    <property type="match status" value="1"/>
</dbReference>
<dbReference type="PROSITE" id="PS00902">
    <property type="entry name" value="GLUTAMATE_5_KINASE"/>
    <property type="match status" value="1"/>
</dbReference>
<dbReference type="PROSITE" id="PS50890">
    <property type="entry name" value="PUA"/>
    <property type="match status" value="1"/>
</dbReference>
<proteinExistence type="inferred from homology"/>
<sequence length="373" mass="39997">MRSGILSKVKRIVIKIGSGVLTCGDNGLNKPLMGSIAAQVAELRASGRQVIIVSSGAVAAGRKELGIDGRPRSIPQKQAAAAIGQSRLMHAYEEAFEPFGHKVAQILLTRDDLAHRGRFLNARATLDTLLSFGVIPIINENDTVVFDEIKFGDNDSLSALVTNLAEANLLVILTDIDGFYEANPRTNPDARLIPLVRQITREMERAAGGSGSTVGTGGMVTKLAAAKKAGQFGVPTLMLNGRNPSLLAEAFAGREVGTLFLPGKESLNRRKHWIAHTLRPSGKIIVDDGARTVLARQGKSLLPSGVVRVEGKFDRGACVRVCGTDGTEIARGLVDYSHDEITRILGHRSGEIEAILGYKYGDEIIHRDNLVVL</sequence>
<gene>
    <name evidence="1" type="primary">proB</name>
    <name type="ordered locus">GSU3212</name>
</gene>
<organism>
    <name type="scientific">Geobacter sulfurreducens (strain ATCC 51573 / DSM 12127 / PCA)</name>
    <dbReference type="NCBI Taxonomy" id="243231"/>
    <lineage>
        <taxon>Bacteria</taxon>
        <taxon>Pseudomonadati</taxon>
        <taxon>Thermodesulfobacteriota</taxon>
        <taxon>Desulfuromonadia</taxon>
        <taxon>Geobacterales</taxon>
        <taxon>Geobacteraceae</taxon>
        <taxon>Geobacter</taxon>
    </lineage>
</organism>
<evidence type="ECO:0000255" key="1">
    <source>
        <dbReference type="HAMAP-Rule" id="MF_00456"/>
    </source>
</evidence>
<reference key="1">
    <citation type="journal article" date="2003" name="Science">
        <title>Genome of Geobacter sulfurreducens: metal reduction in subsurface environments.</title>
        <authorList>
            <person name="Methe B.A."/>
            <person name="Nelson K.E."/>
            <person name="Eisen J.A."/>
            <person name="Paulsen I.T."/>
            <person name="Nelson W.C."/>
            <person name="Heidelberg J.F."/>
            <person name="Wu D."/>
            <person name="Wu M."/>
            <person name="Ward N.L."/>
            <person name="Beanan M.J."/>
            <person name="Dodson R.J."/>
            <person name="Madupu R."/>
            <person name="Brinkac L.M."/>
            <person name="Daugherty S.C."/>
            <person name="DeBoy R.T."/>
            <person name="Durkin A.S."/>
            <person name="Gwinn M.L."/>
            <person name="Kolonay J.F."/>
            <person name="Sullivan S.A."/>
            <person name="Haft D.H."/>
            <person name="Selengut J."/>
            <person name="Davidsen T.M."/>
            <person name="Zafar N."/>
            <person name="White O."/>
            <person name="Tran B."/>
            <person name="Romero C."/>
            <person name="Forberger H.A."/>
            <person name="Weidman J.F."/>
            <person name="Khouri H.M."/>
            <person name="Feldblyum T.V."/>
            <person name="Utterback T.R."/>
            <person name="Van Aken S.E."/>
            <person name="Lovley D.R."/>
            <person name="Fraser C.M."/>
        </authorList>
    </citation>
    <scope>NUCLEOTIDE SEQUENCE [LARGE SCALE GENOMIC DNA]</scope>
    <source>
        <strain>ATCC 51573 / DSM 12127 / PCA</strain>
    </source>
</reference>
<feature type="chain" id="PRO_0000109675" description="Glutamate 5-kinase">
    <location>
        <begin position="1"/>
        <end position="373"/>
    </location>
</feature>
<feature type="domain" description="PUA" evidence="1">
    <location>
        <begin position="281"/>
        <end position="359"/>
    </location>
</feature>
<feature type="binding site" evidence="1">
    <location>
        <position position="15"/>
    </location>
    <ligand>
        <name>ATP</name>
        <dbReference type="ChEBI" id="CHEBI:30616"/>
    </ligand>
</feature>
<feature type="binding site" evidence="1">
    <location>
        <position position="55"/>
    </location>
    <ligand>
        <name>substrate</name>
    </ligand>
</feature>
<feature type="binding site" evidence="1">
    <location>
        <position position="142"/>
    </location>
    <ligand>
        <name>substrate</name>
    </ligand>
</feature>
<feature type="binding site" evidence="1">
    <location>
        <position position="154"/>
    </location>
    <ligand>
        <name>substrate</name>
    </ligand>
</feature>
<feature type="binding site" evidence="1">
    <location>
        <begin position="174"/>
        <end position="175"/>
    </location>
    <ligand>
        <name>ATP</name>
        <dbReference type="ChEBI" id="CHEBI:30616"/>
    </ligand>
</feature>
<feature type="binding site" evidence="1">
    <location>
        <begin position="216"/>
        <end position="222"/>
    </location>
    <ligand>
        <name>ATP</name>
        <dbReference type="ChEBI" id="CHEBI:30616"/>
    </ligand>
</feature>
<keyword id="KW-0028">Amino-acid biosynthesis</keyword>
<keyword id="KW-0067">ATP-binding</keyword>
<keyword id="KW-0963">Cytoplasm</keyword>
<keyword id="KW-0418">Kinase</keyword>
<keyword id="KW-0547">Nucleotide-binding</keyword>
<keyword id="KW-0641">Proline biosynthesis</keyword>
<keyword id="KW-1185">Reference proteome</keyword>
<keyword id="KW-0808">Transferase</keyword>
<protein>
    <recommendedName>
        <fullName evidence="1">Glutamate 5-kinase</fullName>
        <ecNumber evidence="1">2.7.2.11</ecNumber>
    </recommendedName>
    <alternativeName>
        <fullName evidence="1">Gamma-glutamyl kinase</fullName>
        <shortName evidence="1">GK</shortName>
    </alternativeName>
</protein>